<evidence type="ECO:0000255" key="1">
    <source>
        <dbReference type="HAMAP-Rule" id="MF_01328"/>
    </source>
</evidence>
<evidence type="ECO:0000256" key="2">
    <source>
        <dbReference type="SAM" id="MobiDB-lite"/>
    </source>
</evidence>
<evidence type="ECO:0000305" key="3"/>
<keyword id="KW-0687">Ribonucleoprotein</keyword>
<keyword id="KW-0689">Ribosomal protein</keyword>
<keyword id="KW-0694">RNA-binding</keyword>
<keyword id="KW-0699">rRNA-binding</keyword>
<comment type="function">
    <text evidence="1">One of the primary rRNA binding proteins, this protein initially binds near the 5'-end of the 23S rRNA. It is important during the early stages of 50S assembly. It makes multiple contacts with different domains of the 23S rRNA in the assembled 50S subunit and ribosome.</text>
</comment>
<comment type="function">
    <text evidence="1">Forms part of the polypeptide exit tunnel.</text>
</comment>
<comment type="subunit">
    <text evidence="1">Part of the 50S ribosomal subunit.</text>
</comment>
<comment type="similarity">
    <text evidence="1">Belongs to the universal ribosomal protein uL4 family.</text>
</comment>
<gene>
    <name evidence="1" type="primary">rplD</name>
    <name type="ordered locus">VFMJ11_0226</name>
</gene>
<protein>
    <recommendedName>
        <fullName evidence="1">Large ribosomal subunit protein uL4</fullName>
    </recommendedName>
    <alternativeName>
        <fullName evidence="3">50S ribosomal protein L4</fullName>
    </alternativeName>
</protein>
<reference key="1">
    <citation type="submission" date="2008-08" db="EMBL/GenBank/DDBJ databases">
        <title>Complete sequence of Vibrio fischeri strain MJ11.</title>
        <authorList>
            <person name="Mandel M.J."/>
            <person name="Stabb E.V."/>
            <person name="Ruby E.G."/>
            <person name="Ferriera S."/>
            <person name="Johnson J."/>
            <person name="Kravitz S."/>
            <person name="Beeson K."/>
            <person name="Sutton G."/>
            <person name="Rogers Y.-H."/>
            <person name="Friedman R."/>
            <person name="Frazier M."/>
            <person name="Venter J.C."/>
        </authorList>
    </citation>
    <scope>NUCLEOTIDE SEQUENCE [LARGE SCALE GENOMIC DNA]</scope>
    <source>
        <strain>MJ11</strain>
    </source>
</reference>
<feature type="chain" id="PRO_1000142204" description="Large ribosomal subunit protein uL4">
    <location>
        <begin position="1"/>
        <end position="200"/>
    </location>
</feature>
<feature type="region of interest" description="Disordered" evidence="2">
    <location>
        <begin position="42"/>
        <end position="65"/>
    </location>
</feature>
<sequence length="200" mass="21809">MELMVKGADALTVSETTFGREFNEALVHQVVVAYAAGARQGTRAQKTRSEVSGGGAKPWRQKGTGRARAGTIRSPIWRTGGVTFAAKPQDHSQKVNKKMYRGALKSILSELVRQDRLIVVDNFSVEAPKTKELVAKLKELELNDVLIVTGEVDENLFLAARNLYKVDARDVAGIDPVSLVAFDKVLMTAAAVKQVEEMLA</sequence>
<dbReference type="EMBL" id="CP001139">
    <property type="protein sequence ID" value="ACH65050.1"/>
    <property type="molecule type" value="Genomic_DNA"/>
</dbReference>
<dbReference type="RefSeq" id="WP_005417226.1">
    <property type="nucleotide sequence ID" value="NC_011184.1"/>
</dbReference>
<dbReference type="SMR" id="B5FG10"/>
<dbReference type="GeneID" id="54162859"/>
<dbReference type="KEGG" id="vfm:VFMJ11_0226"/>
<dbReference type="HOGENOM" id="CLU_041575_5_2_6"/>
<dbReference type="Proteomes" id="UP000001857">
    <property type="component" value="Chromosome I"/>
</dbReference>
<dbReference type="GO" id="GO:1990904">
    <property type="term" value="C:ribonucleoprotein complex"/>
    <property type="evidence" value="ECO:0007669"/>
    <property type="project" value="UniProtKB-KW"/>
</dbReference>
<dbReference type="GO" id="GO:0005840">
    <property type="term" value="C:ribosome"/>
    <property type="evidence" value="ECO:0007669"/>
    <property type="project" value="UniProtKB-KW"/>
</dbReference>
<dbReference type="GO" id="GO:0019843">
    <property type="term" value="F:rRNA binding"/>
    <property type="evidence" value="ECO:0007669"/>
    <property type="project" value="UniProtKB-UniRule"/>
</dbReference>
<dbReference type="GO" id="GO:0003735">
    <property type="term" value="F:structural constituent of ribosome"/>
    <property type="evidence" value="ECO:0007669"/>
    <property type="project" value="InterPro"/>
</dbReference>
<dbReference type="GO" id="GO:0006412">
    <property type="term" value="P:translation"/>
    <property type="evidence" value="ECO:0007669"/>
    <property type="project" value="UniProtKB-UniRule"/>
</dbReference>
<dbReference type="FunFam" id="3.40.1370.10:FF:000001">
    <property type="entry name" value="50S ribosomal protein L4"/>
    <property type="match status" value="1"/>
</dbReference>
<dbReference type="Gene3D" id="3.40.1370.10">
    <property type="match status" value="1"/>
</dbReference>
<dbReference type="HAMAP" id="MF_01328_B">
    <property type="entry name" value="Ribosomal_uL4_B"/>
    <property type="match status" value="1"/>
</dbReference>
<dbReference type="InterPro" id="IPR002136">
    <property type="entry name" value="Ribosomal_uL4"/>
</dbReference>
<dbReference type="InterPro" id="IPR013005">
    <property type="entry name" value="Ribosomal_uL4-like"/>
</dbReference>
<dbReference type="InterPro" id="IPR023574">
    <property type="entry name" value="Ribosomal_uL4_dom_sf"/>
</dbReference>
<dbReference type="NCBIfam" id="TIGR03953">
    <property type="entry name" value="rplD_bact"/>
    <property type="match status" value="1"/>
</dbReference>
<dbReference type="PANTHER" id="PTHR10746">
    <property type="entry name" value="50S RIBOSOMAL PROTEIN L4"/>
    <property type="match status" value="1"/>
</dbReference>
<dbReference type="PANTHER" id="PTHR10746:SF6">
    <property type="entry name" value="LARGE RIBOSOMAL SUBUNIT PROTEIN UL4M"/>
    <property type="match status" value="1"/>
</dbReference>
<dbReference type="Pfam" id="PF00573">
    <property type="entry name" value="Ribosomal_L4"/>
    <property type="match status" value="1"/>
</dbReference>
<dbReference type="SUPFAM" id="SSF52166">
    <property type="entry name" value="Ribosomal protein L4"/>
    <property type="match status" value="1"/>
</dbReference>
<name>RL4_ALIFM</name>
<proteinExistence type="inferred from homology"/>
<accession>B5FG10</accession>
<organism>
    <name type="scientific">Aliivibrio fischeri (strain MJ11)</name>
    <name type="common">Vibrio fischeri</name>
    <dbReference type="NCBI Taxonomy" id="388396"/>
    <lineage>
        <taxon>Bacteria</taxon>
        <taxon>Pseudomonadati</taxon>
        <taxon>Pseudomonadota</taxon>
        <taxon>Gammaproteobacteria</taxon>
        <taxon>Vibrionales</taxon>
        <taxon>Vibrionaceae</taxon>
        <taxon>Aliivibrio</taxon>
    </lineage>
</organism>